<keyword id="KW-0007">Acetylation</keyword>
<keyword id="KW-0158">Chromosome</keyword>
<keyword id="KW-0164">Citrullination</keyword>
<keyword id="KW-0903">Direct protein sequencing</keyword>
<keyword id="KW-0238">DNA-binding</keyword>
<keyword id="KW-0379">Hydroxylation</keyword>
<keyword id="KW-1017">Isopeptide bond</keyword>
<keyword id="KW-0488">Methylation</keyword>
<keyword id="KW-0544">Nucleosome core</keyword>
<keyword id="KW-0539">Nucleus</keyword>
<keyword id="KW-0597">Phosphoprotein</keyword>
<keyword id="KW-1185">Reference proteome</keyword>
<keyword id="KW-0832">Ubl conjugation</keyword>
<name>H2A1E_RAT</name>
<sequence length="130" mass="14119">MSGRGKQGGKARAKAKTRSSRAGLQFPVGRVHRLLRKGNYAERVGAGAPVYLAAVLEYLTAEILELAGNAARDNKKTRIIPRHLQLAIRNDEELNKLLGRVTIAQGGVLPNIQAVLLPKKTESHHKAKGK</sequence>
<reference key="1">
    <citation type="journal article" date="1976" name="Biochemistry">
        <title>Primary structure and microheterogeneities of rat chloroleukemia histone H2A (histone ALK, IIbl or F2a2).</title>
        <authorList>
            <person name="Laine B."/>
            <person name="Sautiere P."/>
            <person name="Biserte G."/>
        </authorList>
    </citation>
    <scope>PROTEIN SEQUENCE OF 2-130</scope>
    <scope>CLEAVAGE OF INITIATOR METHIONINE</scope>
    <scope>ACETYLATION AT SER-2</scope>
    <source>
        <tissue>Leukemia</tissue>
    </source>
</reference>
<reference key="2">
    <citation type="journal article" date="2009" name="Proteomics">
        <title>Mass spectrometry-compatible silver staining of histones resolved on acetic acid-urea-Triton PAGE.</title>
        <authorList>
            <person name="Pramod K.S."/>
            <person name="Bharat K."/>
            <person name="Sanjay G."/>
        </authorList>
    </citation>
    <scope>IDENTIFICATION BY MASS SPECTROMETRY</scope>
</reference>
<reference key="3">
    <citation type="journal article" date="2011" name="Exp. Biol. Med.">
        <title>Overexpression of histone variant H2A.1 and cellular transformation are related in N-nitrosodiethylamine-induced sequential hepatocarcinogenesis.</title>
        <authorList>
            <person name="Khare S.P."/>
            <person name="Sharma A."/>
            <person name="Deodhar K.K."/>
            <person name="Gupta S."/>
        </authorList>
    </citation>
    <scope>INDUCTION BY NDEA</scope>
    <scope>IDENTIFICATION BY MASS SPECTROMETRY</scope>
</reference>
<feature type="initiator methionine" description="Removed" evidence="8">
    <location>
        <position position="1"/>
    </location>
</feature>
<feature type="chain" id="PRO_0000227511" description="Histone H2A type 1-E">
    <location>
        <begin position="2"/>
        <end position="130"/>
    </location>
</feature>
<feature type="region of interest" description="Disordered" evidence="7">
    <location>
        <begin position="1"/>
        <end position="22"/>
    </location>
</feature>
<feature type="compositionally biased region" description="Basic residues" evidence="7">
    <location>
        <begin position="7"/>
        <end position="19"/>
    </location>
</feature>
<feature type="modified residue" description="N-acetylserine" evidence="8">
    <location>
        <position position="2"/>
    </location>
</feature>
<feature type="modified residue" description="Phosphoserine; by RPS6KA5" evidence="2">
    <location>
        <position position="2"/>
    </location>
</feature>
<feature type="modified residue" description="Citrulline; alternate" evidence="5">
    <location>
        <position position="4"/>
    </location>
</feature>
<feature type="modified residue" description="Symmetric dimethylarginine; by PRMT5; alternate" evidence="2">
    <location>
        <position position="4"/>
    </location>
</feature>
<feature type="modified residue" description="N6-(2-hydroxyisobutyryl)lysine; alternate" evidence="5">
    <location>
        <position position="6"/>
    </location>
</feature>
<feature type="modified residue" description="N6-acetyllysine; alternate" evidence="2">
    <location>
        <position position="6"/>
    </location>
</feature>
<feature type="modified residue" description="N6-(2-hydroxyisobutyryl)lysine; alternate" evidence="5">
    <location>
        <position position="10"/>
    </location>
</feature>
<feature type="modified residue" description="N6-lactoyllysine; alternate" evidence="4">
    <location>
        <position position="10"/>
    </location>
</feature>
<feature type="modified residue" description="N6-succinyllysine; alternate" evidence="3">
    <location>
        <position position="10"/>
    </location>
</feature>
<feature type="modified residue" description="N6-(2-hydroxyisobutyryl)lysine; alternate" evidence="5">
    <location>
        <position position="37"/>
    </location>
</feature>
<feature type="modified residue" description="N6-(beta-hydroxybutyryl)lysine; alternate" evidence="1">
    <location>
        <position position="37"/>
    </location>
</feature>
<feature type="modified residue" description="N6-crotonyllysine; alternate" evidence="5">
    <location>
        <position position="37"/>
    </location>
</feature>
<feature type="modified residue" description="N6-(2-hydroxyisobutyryl)lysine" evidence="5">
    <location>
        <position position="75"/>
    </location>
</feature>
<feature type="modified residue" description="N6-(2-hydroxyisobutyryl)lysine" evidence="5">
    <location>
        <position position="76"/>
    </location>
</feature>
<feature type="modified residue" description="N6-(2-hydroxyisobutyryl)lysine; alternate" evidence="5">
    <location>
        <position position="96"/>
    </location>
</feature>
<feature type="modified residue" description="N6-glutaryllysine; alternate" evidence="5">
    <location>
        <position position="96"/>
    </location>
</feature>
<feature type="modified residue" description="N6-succinyllysine; alternate" evidence="3">
    <location>
        <position position="96"/>
    </location>
</feature>
<feature type="modified residue" description="N5-methylglutamine" evidence="5">
    <location>
        <position position="105"/>
    </location>
</feature>
<feature type="modified residue" description="N6-(2-hydroxyisobutyryl)lysine; alternate" evidence="5">
    <location>
        <position position="119"/>
    </location>
</feature>
<feature type="modified residue" description="N6-crotonyllysine; alternate" evidence="5">
    <location>
        <position position="119"/>
    </location>
</feature>
<feature type="modified residue" description="N6-glutaryllysine; alternate" evidence="5">
    <location>
        <position position="119"/>
    </location>
</feature>
<feature type="modified residue" description="N6-crotonyllysine; alternate" evidence="5">
    <location>
        <position position="120"/>
    </location>
</feature>
<feature type="modified residue" description="N6-glutaryllysine; alternate" evidence="5">
    <location>
        <position position="120"/>
    </location>
</feature>
<feature type="modified residue" description="Phosphothreonine; by DCAF1" evidence="3">
    <location>
        <position position="121"/>
    </location>
</feature>
<feature type="modified residue" description="N6-crotonyllysine; alternate" evidence="5">
    <location>
        <position position="126"/>
    </location>
</feature>
<feature type="modified residue" description="N6-glutaryllysine; alternate" evidence="5">
    <location>
        <position position="126"/>
    </location>
</feature>
<feature type="cross-link" description="Glycyl lysine isopeptide (Lys-Gly) (interchain with G-Cter in ubiquitin)" evidence="3">
    <location>
        <position position="14"/>
    </location>
</feature>
<feature type="cross-link" description="Glycyl lysine isopeptide (Lys-Gly) (interchain with G-Cter in ubiquitin)" evidence="3">
    <location>
        <position position="16"/>
    </location>
</feature>
<feature type="cross-link" description="Glycyl lysine isopeptide (Lys-Gly) (interchain with G-Cter in ubiquitin); alternate" evidence="2">
    <location>
        <position position="120"/>
    </location>
</feature>
<organism>
    <name type="scientific">Rattus norvegicus</name>
    <name type="common">Rat</name>
    <dbReference type="NCBI Taxonomy" id="10116"/>
    <lineage>
        <taxon>Eukaryota</taxon>
        <taxon>Metazoa</taxon>
        <taxon>Chordata</taxon>
        <taxon>Craniata</taxon>
        <taxon>Vertebrata</taxon>
        <taxon>Euteleostomi</taxon>
        <taxon>Mammalia</taxon>
        <taxon>Eutheria</taxon>
        <taxon>Euarchontoglires</taxon>
        <taxon>Glires</taxon>
        <taxon>Rodentia</taxon>
        <taxon>Myomorpha</taxon>
        <taxon>Muroidea</taxon>
        <taxon>Muridae</taxon>
        <taxon>Murinae</taxon>
        <taxon>Rattus</taxon>
    </lineage>
</organism>
<proteinExistence type="evidence at protein level"/>
<evidence type="ECO:0000250" key="1">
    <source>
        <dbReference type="UniProtKB" id="C0HKE1"/>
    </source>
</evidence>
<evidence type="ECO:0000250" key="2">
    <source>
        <dbReference type="UniProtKB" id="C0HKE4"/>
    </source>
</evidence>
<evidence type="ECO:0000250" key="3">
    <source>
        <dbReference type="UniProtKB" id="P04908"/>
    </source>
</evidence>
<evidence type="ECO:0000250" key="4">
    <source>
        <dbReference type="UniProtKB" id="P0C0S5"/>
    </source>
</evidence>
<evidence type="ECO:0000250" key="5">
    <source>
        <dbReference type="UniProtKB" id="P0C0S8"/>
    </source>
</evidence>
<evidence type="ECO:0000250" key="6">
    <source>
        <dbReference type="UniProtKB" id="P22752"/>
    </source>
</evidence>
<evidence type="ECO:0000256" key="7">
    <source>
        <dbReference type="SAM" id="MobiDB-lite"/>
    </source>
</evidence>
<evidence type="ECO:0000269" key="8">
    <source>
    </source>
</evidence>
<evidence type="ECO:0000269" key="9">
    <source>
    </source>
</evidence>
<evidence type="ECO:0000305" key="10"/>
<dbReference type="RefSeq" id="NP_001302421.1">
    <property type="nucleotide sequence ID" value="NM_001315492.1"/>
</dbReference>
<dbReference type="RefSeq" id="NP_001395941.1">
    <property type="nucleotide sequence ID" value="NM_001409012.1"/>
</dbReference>
<dbReference type="RefSeq" id="XP_008769993.1">
    <property type="nucleotide sequence ID" value="XM_008771771.2"/>
</dbReference>
<dbReference type="RefSeq" id="XP_008772222.1">
    <property type="nucleotide sequence ID" value="XM_008774000.2"/>
</dbReference>
<dbReference type="SMR" id="P0C170"/>
<dbReference type="BioGRID" id="273432">
    <property type="interactions" value="2"/>
</dbReference>
<dbReference type="BioGRID" id="3433288">
    <property type="interactions" value="1"/>
</dbReference>
<dbReference type="FunCoup" id="P0C170">
    <property type="interactions" value="1481"/>
</dbReference>
<dbReference type="STRING" id="10116.ENSRNOP00000013790"/>
<dbReference type="iPTMnet" id="P0C170"/>
<dbReference type="PhosphoSitePlus" id="P0C170"/>
<dbReference type="jPOST" id="P0C170"/>
<dbReference type="PaxDb" id="10116-ENSRNOP00000013790"/>
<dbReference type="GeneID" id="103690190"/>
<dbReference type="GeneID" id="502125"/>
<dbReference type="KEGG" id="rno:502125"/>
<dbReference type="UCSC" id="RGD:1594367">
    <property type="organism name" value="rat"/>
</dbReference>
<dbReference type="AGR" id="RGD:1594367"/>
<dbReference type="AGR" id="RGD:9087157"/>
<dbReference type="CTD" id="502125"/>
<dbReference type="RGD" id="1594367">
    <property type="gene designation" value="LOC502125"/>
</dbReference>
<dbReference type="eggNOG" id="KOG1756">
    <property type="taxonomic scope" value="Eukaryota"/>
</dbReference>
<dbReference type="HOGENOM" id="CLU_062828_3_1_1"/>
<dbReference type="InParanoid" id="P0C170"/>
<dbReference type="OrthoDB" id="66332at9989"/>
<dbReference type="PhylomeDB" id="P0C170"/>
<dbReference type="TreeFam" id="TF300137"/>
<dbReference type="PRO" id="PR:P0C170"/>
<dbReference type="Proteomes" id="UP000002494">
    <property type="component" value="Chromosome 17"/>
</dbReference>
<dbReference type="Bgee" id="ENSRNOG00000049649">
    <property type="expression patterns" value="Expressed in thymus and 14 other cell types or tissues"/>
</dbReference>
<dbReference type="ExpressionAtlas" id="P0C170">
    <property type="expression patterns" value="baseline and differential"/>
</dbReference>
<dbReference type="GO" id="GO:0000786">
    <property type="term" value="C:nucleosome"/>
    <property type="evidence" value="ECO:0000318"/>
    <property type="project" value="GO_Central"/>
</dbReference>
<dbReference type="GO" id="GO:0005634">
    <property type="term" value="C:nucleus"/>
    <property type="evidence" value="ECO:0000266"/>
    <property type="project" value="RGD"/>
</dbReference>
<dbReference type="GO" id="GO:0003677">
    <property type="term" value="F:DNA binding"/>
    <property type="evidence" value="ECO:0007669"/>
    <property type="project" value="UniProtKB-KW"/>
</dbReference>
<dbReference type="GO" id="GO:0019899">
    <property type="term" value="F:enzyme binding"/>
    <property type="evidence" value="ECO:0000266"/>
    <property type="project" value="RGD"/>
</dbReference>
<dbReference type="GO" id="GO:0046982">
    <property type="term" value="F:protein heterodimerization activity"/>
    <property type="evidence" value="ECO:0007669"/>
    <property type="project" value="InterPro"/>
</dbReference>
<dbReference type="GO" id="GO:0030527">
    <property type="term" value="F:structural constituent of chromatin"/>
    <property type="evidence" value="ECO:0000318"/>
    <property type="project" value="GO_Central"/>
</dbReference>
<dbReference type="GO" id="GO:0031507">
    <property type="term" value="P:heterochromatin formation"/>
    <property type="evidence" value="ECO:0000318"/>
    <property type="project" value="GO_Central"/>
</dbReference>
<dbReference type="CDD" id="cd00074">
    <property type="entry name" value="HFD_H2A"/>
    <property type="match status" value="1"/>
</dbReference>
<dbReference type="FunFam" id="1.10.20.10:FF:000103">
    <property type="entry name" value="Histone H2A type 1"/>
    <property type="match status" value="1"/>
</dbReference>
<dbReference type="Gene3D" id="1.10.20.10">
    <property type="entry name" value="Histone, subunit A"/>
    <property type="match status" value="1"/>
</dbReference>
<dbReference type="InterPro" id="IPR009072">
    <property type="entry name" value="Histone-fold"/>
</dbReference>
<dbReference type="InterPro" id="IPR002119">
    <property type="entry name" value="Histone_H2A"/>
</dbReference>
<dbReference type="InterPro" id="IPR007125">
    <property type="entry name" value="Histone_H2A/H2B/H3"/>
</dbReference>
<dbReference type="InterPro" id="IPR032454">
    <property type="entry name" value="Histone_H2A_C"/>
</dbReference>
<dbReference type="InterPro" id="IPR032458">
    <property type="entry name" value="Histone_H2A_CS"/>
</dbReference>
<dbReference type="PANTHER" id="PTHR23430">
    <property type="entry name" value="HISTONE H2A"/>
    <property type="match status" value="1"/>
</dbReference>
<dbReference type="Pfam" id="PF00125">
    <property type="entry name" value="Histone"/>
    <property type="match status" value="1"/>
</dbReference>
<dbReference type="Pfam" id="PF16211">
    <property type="entry name" value="Histone_H2A_C"/>
    <property type="match status" value="1"/>
</dbReference>
<dbReference type="PRINTS" id="PR00620">
    <property type="entry name" value="HISTONEH2A"/>
</dbReference>
<dbReference type="SMART" id="SM00414">
    <property type="entry name" value="H2A"/>
    <property type="match status" value="1"/>
</dbReference>
<dbReference type="SUPFAM" id="SSF47113">
    <property type="entry name" value="Histone-fold"/>
    <property type="match status" value="1"/>
</dbReference>
<dbReference type="PROSITE" id="PS00046">
    <property type="entry name" value="HISTONE_H2A"/>
    <property type="match status" value="1"/>
</dbReference>
<comment type="function">
    <text>Core component of nucleosome. Nucleosomes wrap and compact DNA into chromatin, limiting DNA accessibility to the cellular machineries which require DNA as a template. Histones thereby play a central role in transcription regulation, DNA repair, DNA replication and chromosomal stability. DNA accessibility is regulated via a complex set of post-translational modifications of histones, also called histone code, and nucleosome remodeling.</text>
</comment>
<comment type="subunit">
    <text>The nucleosome is a histone octamer containing two molecules each of H2A, H2B, H3 and H4 assembled in one H3-H4 heterotetramer and two H2A-H2B heterodimers. The octamer wraps approximately 147 bp of DNA.</text>
</comment>
<comment type="subcellular location">
    <subcellularLocation>
        <location>Nucleus</location>
    </subcellularLocation>
    <subcellularLocation>
        <location>Chromosome</location>
    </subcellularLocation>
</comment>
<comment type="induction">
    <text evidence="9">Up-regulated in hepatocytes after treatment with the procarcinogen N-nitrosodiethylamine (NDEA).</text>
</comment>
<comment type="PTM">
    <text evidence="5">Deiminated on Arg-4 in granulocytes upon calcium entry.</text>
</comment>
<comment type="PTM">
    <text evidence="5">Monoubiquitination of Lys-120 (H2AK119Ub) by RING1, TRIM37 and RNF2/RING2 complex gives a specific tag for epigenetic transcriptional repression and participates in X chromosome inactivation of female mammals. It is involved in the initiation of both imprinted and random X inactivation. Ubiquitinated H2A is enriched in inactive X chromosome chromatin. Ubiquitination of H2A functions downstream of methylation of 'Lys-27' of histone H3 (H3K27me). H2AK119Ub by RNF2/RING2 can also be induced by ultraviolet and may be involved in DNA repair. Following DNA double-strand breaks (DSBs), it is ubiquitinated through 'Lys-63' linkage of ubiquitin moieties by the E2 ligase UBE2N and the E3 ligases RNF8 and RNF168, leading to the recruitment of repair proteins to sites of DNA damage. Ubiquitination at Lys-14 and Lys-16 (H2AK13Ub and H2AK15Ub, respectively) in response to DNA damage is initiated by RNF168 that mediates monoubiquitination at these 2 sites, and 'Lys-63'-linked ubiquitin are then conjugated to monoubiquitin; RNF8 is able to extend 'Lys-63'-linked ubiquitin chains in vitro. H2AK119Ub and ionizing radiation-induced 'Lys-63'-linked ubiquitination (H2AK13Ub and H2AK15Ub) are distinct events.</text>
</comment>
<comment type="PTM">
    <text evidence="5">Phosphorylation on Ser-2 (H2AS1ph) is enhanced during mitosis. Phosphorylation on Ser-2 by RPS6KA5/MSK1 directly represses transcription. Acetylation of H3 inhibits Ser-2 phosphorylation by RPS6KA5/MSK1. Phosphorylation at Thr-121 (H2AT120ph) by DCAF1 is present in the regulatory region of many tumor suppresor genes and down-regulates their transcription.</text>
</comment>
<comment type="PTM">
    <text evidence="6">Symmetric dimethylation on Arg-4 by the PRDM1/PRMT5 complex may play a crucial role in the germ-cell lineage.</text>
</comment>
<comment type="PTM">
    <text evidence="5">Glutamine methylation at Gln-105 (H2AQ104me) by FBL is specifically dedicated to polymerase I. It is present at 35S ribosomal DNA locus and impairs binding of the FACT complex.</text>
</comment>
<comment type="PTM">
    <text evidence="5">Crotonylation (Kcr) is specifically present in male germ cells and marks testis-specific genes in post-meiotic cells, including X-linked genes that escape sex chromosome inactivation in haploid cells. Crotonylation marks active promoters and enhancers and confers resistance to transcriptional repressors. It is also associated with post-meiotically activated genes on autosomes.</text>
</comment>
<comment type="PTM">
    <text evidence="4">Lactylated in macrophages by EP300/P300 by using lactoyl-CoA directly derived from endogenous or exogenous lactate, leading to stimulates gene transcription.</text>
</comment>
<comment type="similarity">
    <text evidence="10">Belongs to the histone H2A family.</text>
</comment>
<protein>
    <recommendedName>
        <fullName>Histone H2A type 1-E</fullName>
    </recommendedName>
</protein>
<accession>P0C170</accession>